<sequence>MVKSKVKKVEKGKEGEEKRSTYVLLKKVLIPILVFGFAIYAFYLRHLTAGKYFPDPDTFYHFEIYKLVLKEGLPRYYPMSDAPFGSLIGEPLGLYLLPAAFYKVVSLFGYNELQAFLLWPPFVGFLGVIAVYLLGRKVLNEWTGLWGAVVLTVSTANFSRTFSGNARGDGPFMALFIFASVAMLYYLKESNKTRKIIYGTLFVLLTVISLGAWNGSPFGLMVLLGFASLQTIILFIFGKLEELKKFVKEFYPAYLAILAFGYALTFPGIVKIGGFIRFAFEVFLGLIFLLVIMLYGGRYLNYSDKKHRFLVVTIIVLLGFGGAYAYVGPKLFRLMGGAYQSTQVYETVQELAKTTIGDVKAYYGVESGNGLIFFLSIPGLLILLTKYLYDLFKKAKSDNETLFALVFYTMSLYLLYLAVRFLFLASYAVALFFGIFIGFSMDVIEKMKENIGIKAALGIVLSLMILVIPFVHAPVLARSARALKNTEIEVTGWEQALKWLRSNTSKYATATSWWDYGYWIESSLLGNRRASADGGHARDRDHILALFLARDGNISEVDFESWELNYFIIYLNDWAKFNAISYLGGAITRKEYNGDENGRGRVTTILLTQAAGNVYVNPYARIVIKVIQQNKTRRIAVNIGQLECSPILSVAFPGNIKIKGSGRCSDGSPFPYVVYLTPSLGVLAYYKVATSNFVKLAFGIPTSSYSEFAEKLFSNFIPVYQYGSVIVYEFRPFAIYKIEDFINGTWREVGKLSPGKHTLRLYISAFGRDIKNATLYVYALNGTKIIKRIKVGEIKYMNHLEEYPIIVNVTLPTAQKYRFILAQKGPVGVLTGPVRVNGKITNPAYIMREGESGRLELKVGVDKEYTADLYLRATFIYLVRKGGKSNEDYDASFEPHMDTFFITKLKEGIKLRPGENEIVVNAEMPKNAISSYKEKLEKEHGDKLIIRGIRVEPVFIVEKEYTMIEVSASAPHHSSE</sequence>
<accession>O74088</accession>
<protein>
    <recommendedName>
        <fullName>Dolichyl-phosphooligosaccharide-protein glycotransferase 1</fullName>
        <ecNumber>2.4.99.21</ecNumber>
    </recommendedName>
    <alternativeName>
        <fullName>Archaeal glycosylation protein B</fullName>
        <shortName>AglB-L</shortName>
        <shortName>AglB-Long</shortName>
    </alternativeName>
    <alternativeName>
        <fullName>Oligosaccharyl transferase</fullName>
        <shortName>OST</shortName>
        <shortName>OTase</shortName>
    </alternativeName>
</protein>
<gene>
    <name type="primary">aglB1</name>
    <name type="ordered locus">PH0242</name>
</gene>
<keyword id="KW-0002">3D-structure</keyword>
<keyword id="KW-1003">Cell membrane</keyword>
<keyword id="KW-0328">Glycosyltransferase</keyword>
<keyword id="KW-0460">Magnesium</keyword>
<keyword id="KW-0464">Manganese</keyword>
<keyword id="KW-0472">Membrane</keyword>
<keyword id="KW-0479">Metal-binding</keyword>
<keyword id="KW-0808">Transferase</keyword>
<keyword id="KW-0812">Transmembrane</keyword>
<keyword id="KW-1133">Transmembrane helix</keyword>
<reference key="1">
    <citation type="journal article" date="1998" name="DNA Res.">
        <title>Complete sequence and gene organization of the genome of a hyper-thermophilic archaebacterium, Pyrococcus horikoshii OT3.</title>
        <authorList>
            <person name="Kawarabayasi Y."/>
            <person name="Sawada M."/>
            <person name="Horikawa H."/>
            <person name="Haikawa Y."/>
            <person name="Hino Y."/>
            <person name="Yamamoto S."/>
            <person name="Sekine M."/>
            <person name="Baba S."/>
            <person name="Kosugi H."/>
            <person name="Hosoyama A."/>
            <person name="Nagai Y."/>
            <person name="Sakai M."/>
            <person name="Ogura K."/>
            <person name="Otsuka R."/>
            <person name="Nakazawa H."/>
            <person name="Takamiya M."/>
            <person name="Ohfuku Y."/>
            <person name="Funahashi T."/>
            <person name="Tanaka T."/>
            <person name="Kudoh Y."/>
            <person name="Yamazaki J."/>
            <person name="Kushida N."/>
            <person name="Oguchi A."/>
            <person name="Aoki K."/>
            <person name="Yoshizawa T."/>
            <person name="Nakamura Y."/>
            <person name="Robb F.T."/>
            <person name="Horikoshi K."/>
            <person name="Masuchi Y."/>
            <person name="Shizuya H."/>
            <person name="Kikuchi H."/>
        </authorList>
    </citation>
    <scope>NUCLEOTIDE SEQUENCE [LARGE SCALE GENOMIC DNA]</scope>
    <source>
        <strain>ATCC 700860 / DSM 12428 / JCM 9974 / NBRC 100139 / OT-3</strain>
    </source>
</reference>
<reference evidence="7" key="2">
    <citation type="journal article" date="2013" name="Structure">
        <title>Crystallographic and NMR evidence for flexibility in oligosaccharyltransferases and its catalytic significance.</title>
        <authorList>
            <person name="Nyirenda J."/>
            <person name="Matsumoto S."/>
            <person name="Saitoh T."/>
            <person name="Maita N."/>
            <person name="Noda N.N."/>
            <person name="Inagaki F."/>
            <person name="Kohda D."/>
        </authorList>
    </citation>
    <scope>X-RAY CRYSTALLOGRAPHY (2.70 ANGSTROMS) OF 482-976</scope>
</reference>
<comment type="function">
    <text evidence="4">Oligosaccharyl transferase (OST) that catalyzes the initial transfer of a defined glycan (ManNAcXyl(2)GlcAMan(2)GalNAc in Pyrococcus) from the lipid carrier dolichol-monophosphate to an asparagine residue within an Asn-X-Ser/Thr consensus motif in nascent polypeptide chains, the first step in protein N-glycosylation.</text>
</comment>
<comment type="catalytic activity">
    <reaction evidence="4">
        <text>an archaeal dolichyl phosphooligosaccharide + [protein]-L-asparagine = an archaeal dolichyl phosphate + a glycoprotein with the oligosaccharide chain attached by N-beta-D-glycosyl linkage to a protein L-asparagine.</text>
        <dbReference type="EC" id="2.4.99.21"/>
    </reaction>
</comment>
<comment type="cofactor">
    <cofactor evidence="4">
        <name>Mn(2+)</name>
        <dbReference type="ChEBI" id="CHEBI:29035"/>
    </cofactor>
    <cofactor evidence="4">
        <name>Mg(2+)</name>
        <dbReference type="ChEBI" id="CHEBI:18420"/>
    </cofactor>
</comment>
<comment type="pathway">
    <text evidence="4">Protein modification; protein glycosylation.</text>
</comment>
<comment type="subcellular location">
    <subcellularLocation>
        <location evidence="3">Cell membrane</location>
        <topology evidence="3">Multi-pass membrane protein</topology>
    </subcellularLocation>
</comment>
<comment type="domain">
    <text evidence="2">Despite low primary sequence conservation between eukaryotic catalytic subunits and bacterial and archaeal single subunit OSTs (ssOST), structural comparison revealed several common motifs at spatially equivalent positions, like the DXD motif 1 on the external loop 1 and the DXD motif 2 on the external loop 2 involved in binding of the metal ion cofactor and the carboxamide group of the acceptor asparagine, the conserved Glu residue of the TIXE/SVSE motif on the external loop 5 involved in catalysis, as well as the WWDYG and the DK/MI motifs in the globular domain that define the binding pocket for the +2 Ser/Thr of the acceptor sequon. In bacterial ssOSTs, an Arg residue was found to interact with a negatively charged side chain at the -2 position of the sequon. This Arg is conserved in bacterial enzymes and correlates with an extended sequon requirement (Asp-X-Asn-X-Ser/Thr) for bacterial N-glycosylation.</text>
</comment>
<comment type="similarity">
    <text evidence="6">Belongs to the STT3 family.</text>
</comment>
<name>AGLB1_PYRHO</name>
<organism>
    <name type="scientific">Pyrococcus horikoshii (strain ATCC 700860 / DSM 12428 / JCM 9974 / NBRC 100139 / OT-3)</name>
    <dbReference type="NCBI Taxonomy" id="70601"/>
    <lineage>
        <taxon>Archaea</taxon>
        <taxon>Methanobacteriati</taxon>
        <taxon>Methanobacteriota</taxon>
        <taxon>Thermococci</taxon>
        <taxon>Thermococcales</taxon>
        <taxon>Thermococcaceae</taxon>
        <taxon>Pyrococcus</taxon>
    </lineage>
</organism>
<evidence type="ECO:0000250" key="1">
    <source>
        <dbReference type="UniProtKB" id="B9KDD4"/>
    </source>
</evidence>
<evidence type="ECO:0000250" key="2">
    <source>
        <dbReference type="UniProtKB" id="O29867"/>
    </source>
</evidence>
<evidence type="ECO:0000250" key="3">
    <source>
        <dbReference type="UniProtKB" id="Q2EMT4"/>
    </source>
</evidence>
<evidence type="ECO:0000250" key="4">
    <source>
        <dbReference type="UniProtKB" id="Q8U4D2"/>
    </source>
</evidence>
<evidence type="ECO:0000255" key="5"/>
<evidence type="ECO:0000305" key="6"/>
<evidence type="ECO:0007744" key="7">
    <source>
        <dbReference type="PDB" id="3VU1"/>
    </source>
</evidence>
<evidence type="ECO:0007829" key="8">
    <source>
        <dbReference type="PDB" id="3VU1"/>
    </source>
</evidence>
<feature type="chain" id="PRO_0000445592" description="Dolichyl-phosphooligosaccharide-protein glycotransferase 1">
    <location>
        <begin position="1"/>
        <end position="976"/>
    </location>
</feature>
<feature type="topological domain" description="Cytoplasmic" evidence="6">
    <location>
        <begin position="1"/>
        <end position="21"/>
    </location>
</feature>
<feature type="transmembrane region" description="Helical" evidence="5">
    <location>
        <begin position="22"/>
        <end position="42"/>
    </location>
</feature>
<feature type="topological domain" description="Extracellular" evidence="6">
    <location>
        <begin position="43"/>
        <end position="112"/>
    </location>
</feature>
<feature type="transmembrane region" description="Helical" evidence="5">
    <location>
        <begin position="113"/>
        <end position="133"/>
    </location>
</feature>
<feature type="topological domain" description="Cytoplasmic" evidence="6">
    <location>
        <begin position="134"/>
        <end position="135"/>
    </location>
</feature>
<feature type="transmembrane region" description="Helical" evidence="5">
    <location>
        <begin position="136"/>
        <end position="156"/>
    </location>
</feature>
<feature type="topological domain" description="Extracellular" evidence="6">
    <location>
        <begin position="157"/>
        <end position="165"/>
    </location>
</feature>
<feature type="transmembrane region" description="Helical" evidence="5">
    <location>
        <begin position="166"/>
        <end position="186"/>
    </location>
</feature>
<feature type="topological domain" description="Cytoplasmic" evidence="6">
    <location>
        <begin position="187"/>
        <end position="193"/>
    </location>
</feature>
<feature type="transmembrane region" description="Helical" evidence="5">
    <location>
        <begin position="194"/>
        <end position="214"/>
    </location>
</feature>
<feature type="topological domain" description="Extracellular" evidence="6">
    <location>
        <position position="215"/>
    </location>
</feature>
<feature type="transmembrane region" description="Helical" evidence="5">
    <location>
        <begin position="216"/>
        <end position="236"/>
    </location>
</feature>
<feature type="topological domain" description="Cytoplasmic" evidence="6">
    <location>
        <begin position="237"/>
        <end position="247"/>
    </location>
</feature>
<feature type="transmembrane region" description="Helical" evidence="5">
    <location>
        <begin position="248"/>
        <end position="268"/>
    </location>
</feature>
<feature type="topological domain" description="Extracellular" evidence="6">
    <location>
        <position position="269"/>
    </location>
</feature>
<feature type="transmembrane region" description="Helical" evidence="5">
    <location>
        <begin position="270"/>
        <end position="290"/>
    </location>
</feature>
<feature type="topological domain" description="Cytoplasmic" evidence="6">
    <location>
        <begin position="291"/>
        <end position="306"/>
    </location>
</feature>
<feature type="transmembrane region" description="Helical" evidence="5">
    <location>
        <begin position="307"/>
        <end position="327"/>
    </location>
</feature>
<feature type="topological domain" description="Extracellular" evidence="6">
    <location>
        <begin position="328"/>
        <end position="360"/>
    </location>
</feature>
<feature type="transmembrane region" description="Helical" evidence="5">
    <location>
        <begin position="361"/>
        <end position="381"/>
    </location>
</feature>
<feature type="topological domain" description="Cytoplasmic" evidence="6">
    <location>
        <begin position="382"/>
        <end position="396"/>
    </location>
</feature>
<feature type="transmembrane region" description="Helical" evidence="5">
    <location>
        <begin position="397"/>
        <end position="417"/>
    </location>
</feature>
<feature type="topological domain" description="Extracellular" evidence="6">
    <location>
        <position position="418"/>
    </location>
</feature>
<feature type="transmembrane region" description="Helical" evidence="5">
    <location>
        <begin position="419"/>
        <end position="439"/>
    </location>
</feature>
<feature type="topological domain" description="Cytoplasmic" evidence="6">
    <location>
        <begin position="440"/>
        <end position="453"/>
    </location>
</feature>
<feature type="transmembrane region" description="Helical" evidence="5">
    <location>
        <begin position="454"/>
        <end position="474"/>
    </location>
</feature>
<feature type="topological domain" description="Extracellular" evidence="6">
    <location>
        <begin position="475"/>
        <end position="976"/>
    </location>
</feature>
<feature type="region of interest" description="Interacts with target acceptor peptide in protein substrate" evidence="2">
    <location>
        <begin position="513"/>
        <end position="515"/>
    </location>
</feature>
<feature type="short sequence motif" description="DXD motif 1" evidence="2">
    <location>
        <begin position="55"/>
        <end position="57"/>
    </location>
</feature>
<feature type="short sequence motif" description="DXD motif 2" evidence="2">
    <location>
        <begin position="167"/>
        <end position="169"/>
    </location>
</feature>
<feature type="short sequence motif" description="TIXE motif" evidence="2">
    <location>
        <begin position="347"/>
        <end position="350"/>
    </location>
</feature>
<feature type="short sequence motif" description="WWDYG motif" evidence="4">
    <location>
        <begin position="513"/>
        <end position="517"/>
    </location>
</feature>
<feature type="short sequence motif" description="DK motif" evidence="4">
    <location>
        <begin position="573"/>
        <end position="580"/>
    </location>
</feature>
<feature type="binding site" evidence="2">
    <location>
        <position position="57"/>
    </location>
    <ligand>
        <name>Mn(2+)</name>
        <dbReference type="ChEBI" id="CHEBI:29035"/>
    </ligand>
</feature>
<feature type="binding site" evidence="2">
    <location>
        <position position="167"/>
    </location>
    <ligand>
        <name>Mn(2+)</name>
        <dbReference type="ChEBI" id="CHEBI:29035"/>
    </ligand>
</feature>
<feature type="binding site" evidence="2">
    <location>
        <position position="169"/>
    </location>
    <ligand>
        <name>Mn(2+)</name>
        <dbReference type="ChEBI" id="CHEBI:29035"/>
    </ligand>
</feature>
<feature type="binding site" evidence="2">
    <location>
        <position position="420"/>
    </location>
    <ligand>
        <name>a glycophospholipid</name>
        <dbReference type="ChEBI" id="CHEBI:24397"/>
        <note>archaeal dolichyl phosphooligosaccharide</note>
    </ligand>
</feature>
<feature type="binding site" evidence="1">
    <location>
        <position position="518"/>
    </location>
    <ligand>
        <name>a glycophospholipid</name>
        <dbReference type="ChEBI" id="CHEBI:24397"/>
        <note>archaeal dolichyl phosphooligosaccharide</note>
    </ligand>
</feature>
<feature type="site" description="Interacts with target acceptor peptide in protein substrate" evidence="2">
    <location>
        <position position="57"/>
    </location>
</feature>
<feature type="site" description="Important for catalytic activity" evidence="1">
    <location>
        <position position="160"/>
    </location>
</feature>
<feature type="site" description="Interacts with target acceptor peptide in protein substrate" evidence="2">
    <location>
        <position position="350"/>
    </location>
</feature>
<feature type="site" description="Interacts with target acceptor peptide in protein substrate" evidence="2">
    <location>
        <position position="576"/>
    </location>
</feature>
<feature type="helix" evidence="8">
    <location>
        <begin position="493"/>
        <end position="503"/>
    </location>
</feature>
<feature type="strand" evidence="8">
    <location>
        <begin position="510"/>
        <end position="514"/>
    </location>
</feature>
<feature type="turn" evidence="8">
    <location>
        <begin position="516"/>
        <end position="519"/>
    </location>
</feature>
<feature type="strand" evidence="8">
    <location>
        <begin position="532"/>
        <end position="536"/>
    </location>
</feature>
<feature type="helix" evidence="8">
    <location>
        <begin position="540"/>
        <end position="549"/>
    </location>
</feature>
<feature type="helix" evidence="8">
    <location>
        <begin position="553"/>
        <end position="555"/>
    </location>
</feature>
<feature type="helix" evidence="8">
    <location>
        <begin position="559"/>
        <end position="562"/>
    </location>
</feature>
<feature type="strand" evidence="8">
    <location>
        <begin position="566"/>
        <end position="570"/>
    </location>
</feature>
<feature type="helix" evidence="8">
    <location>
        <begin position="571"/>
        <end position="576"/>
    </location>
</feature>
<feature type="helix" evidence="8">
    <location>
        <begin position="577"/>
        <end position="583"/>
    </location>
</feature>
<feature type="helix" evidence="8">
    <location>
        <begin position="589"/>
        <end position="593"/>
    </location>
</feature>
<feature type="strand" evidence="8">
    <location>
        <begin position="605"/>
        <end position="610"/>
    </location>
</feature>
<feature type="strand" evidence="8">
    <location>
        <begin position="612"/>
        <end position="617"/>
    </location>
</feature>
<feature type="turn" evidence="8">
    <location>
        <begin position="618"/>
        <end position="621"/>
    </location>
</feature>
<feature type="strand" evidence="8">
    <location>
        <begin position="622"/>
        <end position="628"/>
    </location>
</feature>
<feature type="strand" evidence="8">
    <location>
        <begin position="630"/>
        <end position="639"/>
    </location>
</feature>
<feature type="strand" evidence="8">
    <location>
        <begin position="642"/>
        <end position="645"/>
    </location>
</feature>
<feature type="strand" evidence="8">
    <location>
        <begin position="647"/>
        <end position="651"/>
    </location>
</feature>
<feature type="turn" evidence="8">
    <location>
        <begin position="652"/>
        <end position="655"/>
    </location>
</feature>
<feature type="strand" evidence="8">
    <location>
        <begin position="656"/>
        <end position="659"/>
    </location>
</feature>
<feature type="strand" evidence="8">
    <location>
        <begin position="662"/>
        <end position="664"/>
    </location>
</feature>
<feature type="strand" evidence="8">
    <location>
        <begin position="667"/>
        <end position="669"/>
    </location>
</feature>
<feature type="strand" evidence="8">
    <location>
        <begin position="672"/>
        <end position="676"/>
    </location>
</feature>
<feature type="strand" evidence="8">
    <location>
        <begin position="678"/>
        <end position="685"/>
    </location>
</feature>
<feature type="helix" evidence="8">
    <location>
        <begin position="686"/>
        <end position="688"/>
    </location>
</feature>
<feature type="helix" evidence="8">
    <location>
        <begin position="692"/>
        <end position="698"/>
    </location>
</feature>
<feature type="helix" evidence="8">
    <location>
        <begin position="708"/>
        <end position="715"/>
    </location>
</feature>
<feature type="strand" evidence="8">
    <location>
        <begin position="716"/>
        <end position="722"/>
    </location>
</feature>
<feature type="strand" evidence="8">
    <location>
        <begin position="725"/>
        <end position="730"/>
    </location>
</feature>
<feature type="strand" evidence="8">
    <location>
        <begin position="732"/>
        <end position="742"/>
    </location>
</feature>
<feature type="strand" evidence="8">
    <location>
        <begin position="745"/>
        <end position="748"/>
    </location>
</feature>
<feature type="strand" evidence="8">
    <location>
        <begin position="750"/>
        <end position="752"/>
    </location>
</feature>
<feature type="strand" evidence="8">
    <location>
        <begin position="754"/>
        <end position="765"/>
    </location>
</feature>
<feature type="strand" evidence="8">
    <location>
        <begin position="770"/>
        <end position="781"/>
    </location>
</feature>
<feature type="strand" evidence="8">
    <location>
        <begin position="784"/>
        <end position="797"/>
    </location>
</feature>
<feature type="strand" evidence="8">
    <location>
        <begin position="805"/>
        <end position="811"/>
    </location>
</feature>
<feature type="strand" evidence="8">
    <location>
        <begin position="815"/>
        <end position="827"/>
    </location>
</feature>
<feature type="strand" evidence="8">
    <location>
        <begin position="834"/>
        <end position="836"/>
    </location>
</feature>
<feature type="strand" evidence="8">
    <location>
        <begin position="839"/>
        <end position="841"/>
    </location>
</feature>
<feature type="strand" evidence="8">
    <location>
        <begin position="852"/>
        <end position="863"/>
    </location>
</feature>
<feature type="strand" evidence="8">
    <location>
        <begin position="865"/>
        <end position="885"/>
    </location>
</feature>
<feature type="strand" evidence="8">
    <location>
        <begin position="892"/>
        <end position="911"/>
    </location>
</feature>
<feature type="strand" evidence="8">
    <location>
        <begin position="913"/>
        <end position="923"/>
    </location>
</feature>
<feature type="helix" evidence="8">
    <location>
        <begin position="928"/>
        <end position="940"/>
    </location>
</feature>
<feature type="helix" evidence="8">
    <location>
        <begin position="941"/>
        <end position="943"/>
    </location>
</feature>
<feature type="strand" evidence="8">
    <location>
        <begin position="944"/>
        <end position="968"/>
    </location>
</feature>
<dbReference type="EC" id="2.4.99.21"/>
<dbReference type="EMBL" id="BA000001">
    <property type="protein sequence ID" value="BAA29314.1"/>
    <property type="molecule type" value="Genomic_DNA"/>
</dbReference>
<dbReference type="PIR" id="C71248">
    <property type="entry name" value="C71248"/>
</dbReference>
<dbReference type="PDB" id="3VU1">
    <property type="method" value="X-ray"/>
    <property type="resolution" value="2.70 A"/>
    <property type="chains" value="A/B=482-976"/>
</dbReference>
<dbReference type="PDBsum" id="3VU1"/>
<dbReference type="SMR" id="O74088"/>
<dbReference type="STRING" id="70601.gene:9377158"/>
<dbReference type="CAZy" id="GT66">
    <property type="family name" value="Glycosyltransferase Family 66"/>
</dbReference>
<dbReference type="EnsemblBacteria" id="BAA29314">
    <property type="protein sequence ID" value="BAA29314"/>
    <property type="gene ID" value="BAA29314"/>
</dbReference>
<dbReference type="KEGG" id="pho:PH0242"/>
<dbReference type="eggNOG" id="arCOG02044">
    <property type="taxonomic scope" value="Archaea"/>
</dbReference>
<dbReference type="BRENDA" id="2.4.99.18">
    <property type="organism ID" value="5244"/>
</dbReference>
<dbReference type="BRENDA" id="2.4.99.21">
    <property type="organism ID" value="5244"/>
</dbReference>
<dbReference type="UniPathway" id="UPA00378"/>
<dbReference type="EvolutionaryTrace" id="O74088"/>
<dbReference type="Proteomes" id="UP000000752">
    <property type="component" value="Chromosome"/>
</dbReference>
<dbReference type="GO" id="GO:0005886">
    <property type="term" value="C:plasma membrane"/>
    <property type="evidence" value="ECO:0007669"/>
    <property type="project" value="UniProtKB-SubCell"/>
</dbReference>
<dbReference type="GO" id="GO:0046872">
    <property type="term" value="F:metal ion binding"/>
    <property type="evidence" value="ECO:0007669"/>
    <property type="project" value="UniProtKB-KW"/>
</dbReference>
<dbReference type="GO" id="GO:0004576">
    <property type="term" value="F:oligosaccharyl transferase activity"/>
    <property type="evidence" value="ECO:0007669"/>
    <property type="project" value="InterPro"/>
</dbReference>
<dbReference type="GO" id="GO:0006486">
    <property type="term" value="P:protein glycosylation"/>
    <property type="evidence" value="ECO:0007669"/>
    <property type="project" value="UniProtKB-UniPathway"/>
</dbReference>
<dbReference type="Gene3D" id="2.40.128.390">
    <property type="match status" value="1"/>
</dbReference>
<dbReference type="Gene3D" id="2.60.40.3020">
    <property type="match status" value="1"/>
</dbReference>
<dbReference type="Gene3D" id="2.60.40.3030">
    <property type="match status" value="1"/>
</dbReference>
<dbReference type="Gene3D" id="3.40.50.12610">
    <property type="match status" value="1"/>
</dbReference>
<dbReference type="InterPro" id="IPR003674">
    <property type="entry name" value="Oligo_trans_STT3"/>
</dbReference>
<dbReference type="InterPro" id="IPR041530">
    <property type="entry name" value="OST_IS"/>
</dbReference>
<dbReference type="InterPro" id="IPR048858">
    <property type="entry name" value="OST_P1"/>
</dbReference>
<dbReference type="InterPro" id="IPR041152">
    <property type="entry name" value="OST_P2"/>
</dbReference>
<dbReference type="InterPro" id="IPR048307">
    <property type="entry name" value="STT3_N"/>
</dbReference>
<dbReference type="PANTHER" id="PTHR13872">
    <property type="entry name" value="DOLICHYL-DIPHOSPHOOLIGOSACCHARIDE--PROTEIN GLYCOSYLTRANSFERASE SUBUNIT"/>
    <property type="match status" value="1"/>
</dbReference>
<dbReference type="PANTHER" id="PTHR13872:SF1">
    <property type="entry name" value="DOLICHYL-DIPHOSPHOOLIGOSACCHARIDE--PROTEIN GLYCOSYLTRANSFERASE SUBUNIT STT3B"/>
    <property type="match status" value="1"/>
</dbReference>
<dbReference type="Pfam" id="PF18246">
    <property type="entry name" value="OST_IS"/>
    <property type="match status" value="1"/>
</dbReference>
<dbReference type="Pfam" id="PF21618">
    <property type="entry name" value="OST_P1"/>
    <property type="match status" value="1"/>
</dbReference>
<dbReference type="Pfam" id="PF18235">
    <property type="entry name" value="OST_P2"/>
    <property type="match status" value="1"/>
</dbReference>
<dbReference type="Pfam" id="PF02516">
    <property type="entry name" value="STT3"/>
    <property type="match status" value="1"/>
</dbReference>
<proteinExistence type="evidence at protein level"/>